<dbReference type="EMBL" id="CU928162">
    <property type="protein sequence ID" value="CAR07141.1"/>
    <property type="molecule type" value="Genomic_DNA"/>
</dbReference>
<dbReference type="RefSeq" id="WP_000167336.1">
    <property type="nucleotide sequence ID" value="NC_011745.1"/>
</dbReference>
<dbReference type="SMR" id="B7MS27"/>
<dbReference type="GeneID" id="93776505"/>
<dbReference type="KEGG" id="ecq:ECED1_0939"/>
<dbReference type="HOGENOM" id="CLU_105066_2_0_6"/>
<dbReference type="Proteomes" id="UP000000748">
    <property type="component" value="Chromosome"/>
</dbReference>
<dbReference type="GO" id="GO:0005694">
    <property type="term" value="C:chromosome"/>
    <property type="evidence" value="ECO:0007669"/>
    <property type="project" value="InterPro"/>
</dbReference>
<dbReference type="GO" id="GO:0005829">
    <property type="term" value="C:cytosol"/>
    <property type="evidence" value="ECO:0007669"/>
    <property type="project" value="TreeGrafter"/>
</dbReference>
<dbReference type="GO" id="GO:0003677">
    <property type="term" value="F:DNA binding"/>
    <property type="evidence" value="ECO:0007669"/>
    <property type="project" value="UniProtKB-UniRule"/>
</dbReference>
<dbReference type="GO" id="GO:0030527">
    <property type="term" value="F:structural constituent of chromatin"/>
    <property type="evidence" value="ECO:0007669"/>
    <property type="project" value="InterPro"/>
</dbReference>
<dbReference type="GO" id="GO:0006310">
    <property type="term" value="P:DNA recombination"/>
    <property type="evidence" value="ECO:0007669"/>
    <property type="project" value="UniProtKB-UniRule"/>
</dbReference>
<dbReference type="GO" id="GO:0006355">
    <property type="term" value="P:regulation of DNA-templated transcription"/>
    <property type="evidence" value="ECO:0007669"/>
    <property type="project" value="UniProtKB-UniRule"/>
</dbReference>
<dbReference type="GO" id="GO:0006417">
    <property type="term" value="P:regulation of translation"/>
    <property type="evidence" value="ECO:0007669"/>
    <property type="project" value="UniProtKB-UniRule"/>
</dbReference>
<dbReference type="CDD" id="cd13836">
    <property type="entry name" value="IHF_B"/>
    <property type="match status" value="1"/>
</dbReference>
<dbReference type="FunFam" id="4.10.520.10:FF:000003">
    <property type="entry name" value="Integration host factor subunit beta"/>
    <property type="match status" value="1"/>
</dbReference>
<dbReference type="Gene3D" id="4.10.520.10">
    <property type="entry name" value="IHF-like DNA-binding proteins"/>
    <property type="match status" value="1"/>
</dbReference>
<dbReference type="HAMAP" id="MF_00381">
    <property type="entry name" value="IHF_beta"/>
    <property type="match status" value="1"/>
</dbReference>
<dbReference type="InterPro" id="IPR000119">
    <property type="entry name" value="Hist_DNA-bd"/>
</dbReference>
<dbReference type="InterPro" id="IPR020816">
    <property type="entry name" value="Histone-like_DNA-bd_CS"/>
</dbReference>
<dbReference type="InterPro" id="IPR010992">
    <property type="entry name" value="IHF-like_DNA-bd_dom_sf"/>
</dbReference>
<dbReference type="InterPro" id="IPR005685">
    <property type="entry name" value="IHF_beta"/>
</dbReference>
<dbReference type="NCBIfam" id="TIGR00988">
    <property type="entry name" value="hip"/>
    <property type="match status" value="1"/>
</dbReference>
<dbReference type="NCBIfam" id="NF001222">
    <property type="entry name" value="PRK00199.1"/>
    <property type="match status" value="1"/>
</dbReference>
<dbReference type="PANTHER" id="PTHR33175">
    <property type="entry name" value="DNA-BINDING PROTEIN HU"/>
    <property type="match status" value="1"/>
</dbReference>
<dbReference type="PANTHER" id="PTHR33175:SF5">
    <property type="entry name" value="INTEGRATION HOST FACTOR SUBUNIT BETA"/>
    <property type="match status" value="1"/>
</dbReference>
<dbReference type="Pfam" id="PF00216">
    <property type="entry name" value="Bac_DNA_binding"/>
    <property type="match status" value="1"/>
</dbReference>
<dbReference type="PRINTS" id="PR01727">
    <property type="entry name" value="DNABINDINGHU"/>
</dbReference>
<dbReference type="SMART" id="SM00411">
    <property type="entry name" value="BHL"/>
    <property type="match status" value="1"/>
</dbReference>
<dbReference type="SUPFAM" id="SSF47729">
    <property type="entry name" value="IHF-like DNA-binding proteins"/>
    <property type="match status" value="1"/>
</dbReference>
<dbReference type="PROSITE" id="PS00045">
    <property type="entry name" value="HISTONE_LIKE"/>
    <property type="match status" value="1"/>
</dbReference>
<comment type="function">
    <text evidence="1">This protein is one of the two subunits of integration host factor, a specific DNA-binding protein that functions in genetic recombination as well as in transcriptional and translational control.</text>
</comment>
<comment type="subunit">
    <text evidence="1">Heterodimer of an alpha and a beta chain.</text>
</comment>
<comment type="similarity">
    <text evidence="1">Belongs to the bacterial histone-like protein family.</text>
</comment>
<name>IHFB_ECO81</name>
<proteinExistence type="inferred from homology"/>
<sequence length="94" mass="10651">MTKSELIERLATQQSHIPAKTVEDAVKEMLEHMASTLAQGERIEIRGFGSFSLHYRAPRTGRNPKTGDKVELEGKYVPHFKPGKELRDRANIYG</sequence>
<organism>
    <name type="scientific">Escherichia coli O81 (strain ED1a)</name>
    <dbReference type="NCBI Taxonomy" id="585397"/>
    <lineage>
        <taxon>Bacteria</taxon>
        <taxon>Pseudomonadati</taxon>
        <taxon>Pseudomonadota</taxon>
        <taxon>Gammaproteobacteria</taxon>
        <taxon>Enterobacterales</taxon>
        <taxon>Enterobacteriaceae</taxon>
        <taxon>Escherichia</taxon>
    </lineage>
</organism>
<gene>
    <name evidence="1" type="primary">ihfB</name>
    <name evidence="1" type="synonym">himD</name>
    <name type="ordered locus">ECED1_0939</name>
</gene>
<keyword id="KW-0233">DNA recombination</keyword>
<keyword id="KW-0238">DNA-binding</keyword>
<keyword id="KW-0804">Transcription</keyword>
<keyword id="KW-0805">Transcription regulation</keyword>
<keyword id="KW-0810">Translation regulation</keyword>
<protein>
    <recommendedName>
        <fullName evidence="1">Integration host factor subunit beta</fullName>
        <shortName evidence="1">IHF-beta</shortName>
    </recommendedName>
</protein>
<accession>B7MS27</accession>
<evidence type="ECO:0000255" key="1">
    <source>
        <dbReference type="HAMAP-Rule" id="MF_00381"/>
    </source>
</evidence>
<feature type="chain" id="PRO_1000190442" description="Integration host factor subunit beta">
    <location>
        <begin position="1"/>
        <end position="94"/>
    </location>
</feature>
<reference key="1">
    <citation type="journal article" date="2009" name="PLoS Genet.">
        <title>Organised genome dynamics in the Escherichia coli species results in highly diverse adaptive paths.</title>
        <authorList>
            <person name="Touchon M."/>
            <person name="Hoede C."/>
            <person name="Tenaillon O."/>
            <person name="Barbe V."/>
            <person name="Baeriswyl S."/>
            <person name="Bidet P."/>
            <person name="Bingen E."/>
            <person name="Bonacorsi S."/>
            <person name="Bouchier C."/>
            <person name="Bouvet O."/>
            <person name="Calteau A."/>
            <person name="Chiapello H."/>
            <person name="Clermont O."/>
            <person name="Cruveiller S."/>
            <person name="Danchin A."/>
            <person name="Diard M."/>
            <person name="Dossat C."/>
            <person name="Karoui M.E."/>
            <person name="Frapy E."/>
            <person name="Garry L."/>
            <person name="Ghigo J.M."/>
            <person name="Gilles A.M."/>
            <person name="Johnson J."/>
            <person name="Le Bouguenec C."/>
            <person name="Lescat M."/>
            <person name="Mangenot S."/>
            <person name="Martinez-Jehanne V."/>
            <person name="Matic I."/>
            <person name="Nassif X."/>
            <person name="Oztas S."/>
            <person name="Petit M.A."/>
            <person name="Pichon C."/>
            <person name="Rouy Z."/>
            <person name="Ruf C.S."/>
            <person name="Schneider D."/>
            <person name="Tourret J."/>
            <person name="Vacherie B."/>
            <person name="Vallenet D."/>
            <person name="Medigue C."/>
            <person name="Rocha E.P.C."/>
            <person name="Denamur E."/>
        </authorList>
    </citation>
    <scope>NUCLEOTIDE SEQUENCE [LARGE SCALE GENOMIC DNA]</scope>
    <source>
        <strain>ED1a</strain>
    </source>
</reference>